<accession>S0ENQ2</accession>
<accession>Q5GN50</accession>
<dbReference type="EC" id="1.13.11.63" evidence="5"/>
<dbReference type="EMBL" id="AJ854252">
    <property type="protein sequence ID" value="CAH70723.1"/>
    <property type="molecule type" value="Genomic_DNA"/>
</dbReference>
<dbReference type="EMBL" id="HF679033">
    <property type="protein sequence ID" value="CCT75764.1"/>
    <property type="molecule type" value="Genomic_DNA"/>
</dbReference>
<dbReference type="SMR" id="S0ENQ2"/>
<dbReference type="STRING" id="1279085.S0ENQ2"/>
<dbReference type="EnsemblFungi" id="CCT75764">
    <property type="protein sequence ID" value="CCT75764"/>
    <property type="gene ID" value="FFUJ_11801"/>
</dbReference>
<dbReference type="VEuPathDB" id="FungiDB:FFUJ_11801"/>
<dbReference type="HOGENOM" id="CLU_016472_4_0_1"/>
<dbReference type="Proteomes" id="UP000016800">
    <property type="component" value="Chromosome 11"/>
</dbReference>
<dbReference type="GO" id="GO:0010436">
    <property type="term" value="F:carotenoid dioxygenase activity"/>
    <property type="evidence" value="ECO:0007669"/>
    <property type="project" value="TreeGrafter"/>
</dbReference>
<dbReference type="GO" id="GO:0046872">
    <property type="term" value="F:metal ion binding"/>
    <property type="evidence" value="ECO:0007669"/>
    <property type="project" value="UniProtKB-KW"/>
</dbReference>
<dbReference type="GO" id="GO:0016121">
    <property type="term" value="P:carotene catabolic process"/>
    <property type="evidence" value="ECO:0007669"/>
    <property type="project" value="TreeGrafter"/>
</dbReference>
<dbReference type="GO" id="GO:0016117">
    <property type="term" value="P:carotenoid biosynthetic process"/>
    <property type="evidence" value="ECO:0007669"/>
    <property type="project" value="UniProtKB-KW"/>
</dbReference>
<dbReference type="InterPro" id="IPR004294">
    <property type="entry name" value="Carotenoid_Oase"/>
</dbReference>
<dbReference type="PANTHER" id="PTHR10543">
    <property type="entry name" value="BETA-CAROTENE DIOXYGENASE"/>
    <property type="match status" value="1"/>
</dbReference>
<dbReference type="PANTHER" id="PTHR10543:SF89">
    <property type="entry name" value="CAROTENOID 9,10(9',10')-CLEAVAGE DIOXYGENASE 1"/>
    <property type="match status" value="1"/>
</dbReference>
<dbReference type="Pfam" id="PF03055">
    <property type="entry name" value="RPE65"/>
    <property type="match status" value="1"/>
</dbReference>
<feature type="chain" id="PRO_0000456846" description="Carotenoid dioxygenase carX">
    <location>
        <begin position="1"/>
        <end position="696"/>
    </location>
</feature>
<feature type="region of interest" description="Disordered" evidence="3">
    <location>
        <begin position="1"/>
        <end position="27"/>
    </location>
</feature>
<feature type="compositionally biased region" description="Polar residues" evidence="3">
    <location>
        <begin position="1"/>
        <end position="16"/>
    </location>
</feature>
<feature type="binding site" evidence="1">
    <location>
        <position position="244"/>
    </location>
    <ligand>
        <name>Fe(2+)</name>
        <dbReference type="ChEBI" id="CHEBI:29033"/>
        <note>catalytic</note>
    </ligand>
</feature>
<feature type="binding site" evidence="2">
    <location>
        <position position="298"/>
    </location>
    <ligand>
        <name>Fe(2+)</name>
        <dbReference type="ChEBI" id="CHEBI:29033"/>
        <note>catalytic</note>
    </ligand>
</feature>
<feature type="binding site" evidence="2">
    <location>
        <position position="361"/>
    </location>
    <ligand>
        <name>Fe(2+)</name>
        <dbReference type="ChEBI" id="CHEBI:29033"/>
        <note>catalytic</note>
    </ligand>
</feature>
<feature type="binding site" evidence="2">
    <location>
        <position position="642"/>
    </location>
    <ligand>
        <name>Fe(2+)</name>
        <dbReference type="ChEBI" id="CHEBI:29033"/>
        <note>catalytic</note>
    </ligand>
</feature>
<feature type="sequence conflict" description="In Ref. 1; CAH70723." evidence="7" ref="1">
    <original>PL</original>
    <variation>AI</variation>
    <location>
        <begin position="24"/>
        <end position="25"/>
    </location>
</feature>
<feature type="sequence conflict" description="In Ref. 1; CAH70723." evidence="7" ref="1">
    <original>N</original>
    <variation>Y</variation>
    <location>
        <position position="563"/>
    </location>
</feature>
<name>CARX_GIBF5</name>
<sequence>MKFLQQNSFTQTSMSQPHEDVSPPLRHPYLTGNFAPIHKTTNLTPCTYSGCIPPELTGGQYVRNGGNPVSHQDLGKDAHWFDGDGMLSGVAFRKASIDGKTIPEFVNQYILTDLYLSRKTTSIASPIMPSITTLVNPLSTMFQIMFATFRTIFLVILSNLPGSQQAIKRISVANTAVLYHDGRALATCESGPPMRIQLPSLDTVGWFDGVEAEGEPEISQAGSDDSPFGGSGIFSFMKEWTTGHPKVDPVTGEMLLYHNTFMPPYVHCSVLPKSNEKAPGHRLVNQPVLGVSGARMMHDFGASRSHTIIMDLPLSLDPLNTMKGKEVVAYDPTKPSRFGVFPRHLPSSVRWFHTAPCCIFHTANTWDSQSSEGELSVNLLACRMTSSTLVYTAGNIRPPVRSRCTQARVWSDEREETACRYKEAPALESPGESTGLADYFPITAESDDYDQCRLYYYEFDLAMESRNHVKSQWALSAIPFEFPSVRPDREMQEARYIYGCSTSTSCFGVALGRADKVDLLVKMDAKTLIQRGKKMNATSITGCVDRRSVCEILQEQRKDDPINIFRLPPNHYAQEPRFVPRACSTEEDDGYLLFYVFDESQLLPSGDCPPSATSELWILDAKNMRDVVAKVRLPQRVPYGLHGTWFSSQDIESQRSVESLRSLEVVQRKKEEWVNSGGQIRKSWMVLREKLEKAVG</sequence>
<proteinExistence type="evidence at protein level"/>
<gene>
    <name evidence="6" type="primary">carX</name>
    <name type="ORF">FFUJ_11801</name>
</gene>
<evidence type="ECO:0000250" key="1">
    <source>
        <dbReference type="UniProtKB" id="Q7S860"/>
    </source>
</evidence>
<evidence type="ECO:0000250" key="2">
    <source>
        <dbReference type="UniProtKB" id="Q9JJS6"/>
    </source>
</evidence>
<evidence type="ECO:0000256" key="3">
    <source>
        <dbReference type="SAM" id="MobiDB-lite"/>
    </source>
</evidence>
<evidence type="ECO:0000269" key="4">
    <source>
    </source>
</evidence>
<evidence type="ECO:0000269" key="5">
    <source>
    </source>
</evidence>
<evidence type="ECO:0000303" key="6">
    <source>
    </source>
</evidence>
<evidence type="ECO:0000305" key="7"/>
<reference key="1">
    <citation type="journal article" date="2005" name="Mol. Genet. Genomics">
        <title>Characterization of a gene in the car cluster of Fusarium fujikuroi that codes for a protein of the carotenoid oxygenase family.</title>
        <authorList>
            <person name="Thewes S."/>
            <person name="Prado-Cabrero A."/>
            <person name="Prado M.M."/>
            <person name="Tudzynski B."/>
            <person name="Avalos J."/>
        </authorList>
    </citation>
    <scope>NUCLEOTIDE SEQUENCE [GENOMIC DNA]</scope>
    <scope>FUNCTION</scope>
    <scope>DISRUPTION PHENOTYPE</scope>
    <scope>INDUCTION</scope>
    <source>
        <strain>CBS 195.34 / IMI 58289 / NRRL A-6831</strain>
    </source>
</reference>
<reference key="2">
    <citation type="journal article" date="2013" name="PLoS Pathog.">
        <title>Deciphering the cryptic genome: genome-wide analyses of the rice pathogen Fusarium fujikuroi reveal complex regulation of secondary metabolism and novel metabolites.</title>
        <authorList>
            <person name="Wiemann P."/>
            <person name="Sieber C.M.K."/>
            <person name="von Bargen K.W."/>
            <person name="Studt L."/>
            <person name="Niehaus E.-M."/>
            <person name="Espino J.J."/>
            <person name="Huss K."/>
            <person name="Michielse C.B."/>
            <person name="Albermann S."/>
            <person name="Wagner D."/>
            <person name="Bergner S.V."/>
            <person name="Connolly L.R."/>
            <person name="Fischer A."/>
            <person name="Reuter G."/>
            <person name="Kleigrewe K."/>
            <person name="Bald T."/>
            <person name="Wingfield B.D."/>
            <person name="Ophir R."/>
            <person name="Freeman S."/>
            <person name="Hippler M."/>
            <person name="Smith K.M."/>
            <person name="Brown D.W."/>
            <person name="Proctor R.H."/>
            <person name="Muensterkoetter M."/>
            <person name="Freitag M."/>
            <person name="Humpf H.-U."/>
            <person name="Gueldener U."/>
            <person name="Tudzynski B."/>
        </authorList>
    </citation>
    <scope>NUCLEOTIDE SEQUENCE [LARGE SCALE GENOMIC DNA]</scope>
    <source>
        <strain>CBS 195.34 / IMI 58289 / NRRL A-6831</strain>
    </source>
</reference>
<reference key="3">
    <citation type="journal article" date="2007" name="Eukaryot. Cell">
        <title>Retinal biosynthesis in fungi: characterization of the carotenoid oxygenase CarX from Fusarium fujikuroi.</title>
        <authorList>
            <person name="Prado-Cabrero A."/>
            <person name="Scherzinger D."/>
            <person name="Avalos J."/>
            <person name="Al-Babili S."/>
        </authorList>
    </citation>
    <scope>FUNCTION</scope>
    <scope>CATALYTIC ACTIVITY</scope>
</reference>
<protein>
    <recommendedName>
        <fullName evidence="6">Carotenoid dioxygenase carX</fullName>
        <ecNumber evidence="5">1.13.11.63</ecNumber>
    </recommendedName>
    <alternativeName>
        <fullName evidence="6">Carotenoid biosynthesis cluster protein X</fullName>
    </alternativeName>
</protein>
<organism>
    <name type="scientific">Gibberella fujikuroi (strain CBS 195.34 / IMI 58289 / NRRL A-6831)</name>
    <name type="common">Bakanae and foot rot disease fungus</name>
    <name type="synonym">Fusarium fujikuroi</name>
    <dbReference type="NCBI Taxonomy" id="1279085"/>
    <lineage>
        <taxon>Eukaryota</taxon>
        <taxon>Fungi</taxon>
        <taxon>Dikarya</taxon>
        <taxon>Ascomycota</taxon>
        <taxon>Pezizomycotina</taxon>
        <taxon>Sordariomycetes</taxon>
        <taxon>Hypocreomycetidae</taxon>
        <taxon>Hypocreales</taxon>
        <taxon>Nectriaceae</taxon>
        <taxon>Fusarium</taxon>
        <taxon>Fusarium fujikuroi species complex</taxon>
    </lineage>
</organism>
<keyword id="KW-0125">Carotenoid biosynthesis</keyword>
<keyword id="KW-0223">Dioxygenase</keyword>
<keyword id="KW-0408">Iron</keyword>
<keyword id="KW-0479">Metal-binding</keyword>
<keyword id="KW-0560">Oxidoreductase</keyword>
<keyword id="KW-1185">Reference proteome</keyword>
<comment type="function">
    <text evidence="4 5">Carotenoid dioxygenase; part of the car gene cluster that mediates the biosynthesis of neurosporaxanthin, a carboxylic apocarotenoid acting as an essential protective pigments and leading to orange pigmentation (PubMed:16049681, PubMed:17293483). CarX mediates the cleavage of beta-carotene produced by carAR into retinal, the rhodopsin's chromophore that is involved in the regulation of the carotenoid biosynthetic pathway via a negative feedback mechanism (PubMed:17293483). It can also convert the synthetic compound beta-apo-8'-carotenal but not C35-apocarotenoids such as the acidic apocarotenoid neurosporaxanthin (C35), as well as its corresponding aldehyde beta-apo-4'-carotenal (PubMed:17293483).</text>
</comment>
<comment type="catalytic activity">
    <reaction evidence="5">
        <text>all-trans-beta-carotene + O2 = 2 all-trans-retinal</text>
        <dbReference type="Rhea" id="RHEA:32887"/>
        <dbReference type="ChEBI" id="CHEBI:15379"/>
        <dbReference type="ChEBI" id="CHEBI:17579"/>
        <dbReference type="ChEBI" id="CHEBI:17898"/>
        <dbReference type="EC" id="1.13.11.63"/>
    </reaction>
    <physiologicalReaction direction="left-to-right" evidence="5">
        <dbReference type="Rhea" id="RHEA:32888"/>
    </physiologicalReaction>
</comment>
<comment type="cofactor">
    <cofactor evidence="1">
        <name>Fe(2+)</name>
        <dbReference type="ChEBI" id="CHEBI:29033"/>
    </cofactor>
    <text evidence="1">Binds 1 Fe(2+) ion per subunit.</text>
</comment>
<comment type="pathway">
    <text evidence="4 5">Carotenoid biosynthesis.</text>
</comment>
<comment type="induction">
    <text evidence="4">The expression is subject to photoinduction.</text>
</comment>
<comment type="disruption phenotype">
    <text evidence="4">Does not impede neurosporaxanthin biosynthesis and shows a significant increase in the total carotenoid content (PubMed:16049681). Leads to increased expression of carAR and carO, but not carB (PubMed:16049681).</text>
</comment>
<comment type="similarity">
    <text evidence="7">Belongs to the carotenoid oxygenase family.</text>
</comment>